<accession>Q9D1G3</accession>
<accession>Q3TZE3</accession>
<accession>Q8R1K3</accession>
<keyword id="KW-0256">Endoplasmic reticulum</keyword>
<keyword id="KW-0472">Membrane</keyword>
<keyword id="KW-1185">Reference proteome</keyword>
<keyword id="KW-0812">Transmembrane</keyword>
<keyword id="KW-1133">Transmembrane helix</keyword>
<reference key="1">
    <citation type="journal article" date="2005" name="Science">
        <title>The transcriptional landscape of the mammalian genome.</title>
        <authorList>
            <person name="Carninci P."/>
            <person name="Kasukawa T."/>
            <person name="Katayama S."/>
            <person name="Gough J."/>
            <person name="Frith M.C."/>
            <person name="Maeda N."/>
            <person name="Oyama R."/>
            <person name="Ravasi T."/>
            <person name="Lenhard B."/>
            <person name="Wells C."/>
            <person name="Kodzius R."/>
            <person name="Shimokawa K."/>
            <person name="Bajic V.B."/>
            <person name="Brenner S.E."/>
            <person name="Batalov S."/>
            <person name="Forrest A.R."/>
            <person name="Zavolan M."/>
            <person name="Davis M.J."/>
            <person name="Wilming L.G."/>
            <person name="Aidinis V."/>
            <person name="Allen J.E."/>
            <person name="Ambesi-Impiombato A."/>
            <person name="Apweiler R."/>
            <person name="Aturaliya R.N."/>
            <person name="Bailey T.L."/>
            <person name="Bansal M."/>
            <person name="Baxter L."/>
            <person name="Beisel K.W."/>
            <person name="Bersano T."/>
            <person name="Bono H."/>
            <person name="Chalk A.M."/>
            <person name="Chiu K.P."/>
            <person name="Choudhary V."/>
            <person name="Christoffels A."/>
            <person name="Clutterbuck D.R."/>
            <person name="Crowe M.L."/>
            <person name="Dalla E."/>
            <person name="Dalrymple B.P."/>
            <person name="de Bono B."/>
            <person name="Della Gatta G."/>
            <person name="di Bernardo D."/>
            <person name="Down T."/>
            <person name="Engstrom P."/>
            <person name="Fagiolini M."/>
            <person name="Faulkner G."/>
            <person name="Fletcher C.F."/>
            <person name="Fukushima T."/>
            <person name="Furuno M."/>
            <person name="Futaki S."/>
            <person name="Gariboldi M."/>
            <person name="Georgii-Hemming P."/>
            <person name="Gingeras T.R."/>
            <person name="Gojobori T."/>
            <person name="Green R.E."/>
            <person name="Gustincich S."/>
            <person name="Harbers M."/>
            <person name="Hayashi Y."/>
            <person name="Hensch T.K."/>
            <person name="Hirokawa N."/>
            <person name="Hill D."/>
            <person name="Huminiecki L."/>
            <person name="Iacono M."/>
            <person name="Ikeo K."/>
            <person name="Iwama A."/>
            <person name="Ishikawa T."/>
            <person name="Jakt M."/>
            <person name="Kanapin A."/>
            <person name="Katoh M."/>
            <person name="Kawasawa Y."/>
            <person name="Kelso J."/>
            <person name="Kitamura H."/>
            <person name="Kitano H."/>
            <person name="Kollias G."/>
            <person name="Krishnan S.P."/>
            <person name="Kruger A."/>
            <person name="Kummerfeld S.K."/>
            <person name="Kurochkin I.V."/>
            <person name="Lareau L.F."/>
            <person name="Lazarevic D."/>
            <person name="Lipovich L."/>
            <person name="Liu J."/>
            <person name="Liuni S."/>
            <person name="McWilliam S."/>
            <person name="Madan Babu M."/>
            <person name="Madera M."/>
            <person name="Marchionni L."/>
            <person name="Matsuda H."/>
            <person name="Matsuzawa S."/>
            <person name="Miki H."/>
            <person name="Mignone F."/>
            <person name="Miyake S."/>
            <person name="Morris K."/>
            <person name="Mottagui-Tabar S."/>
            <person name="Mulder N."/>
            <person name="Nakano N."/>
            <person name="Nakauchi H."/>
            <person name="Ng P."/>
            <person name="Nilsson R."/>
            <person name="Nishiguchi S."/>
            <person name="Nishikawa S."/>
            <person name="Nori F."/>
            <person name="Ohara O."/>
            <person name="Okazaki Y."/>
            <person name="Orlando V."/>
            <person name="Pang K.C."/>
            <person name="Pavan W.J."/>
            <person name="Pavesi G."/>
            <person name="Pesole G."/>
            <person name="Petrovsky N."/>
            <person name="Piazza S."/>
            <person name="Reed J."/>
            <person name="Reid J.F."/>
            <person name="Ring B.Z."/>
            <person name="Ringwald M."/>
            <person name="Rost B."/>
            <person name="Ruan Y."/>
            <person name="Salzberg S.L."/>
            <person name="Sandelin A."/>
            <person name="Schneider C."/>
            <person name="Schoenbach C."/>
            <person name="Sekiguchi K."/>
            <person name="Semple C.A."/>
            <person name="Seno S."/>
            <person name="Sessa L."/>
            <person name="Sheng Y."/>
            <person name="Shibata Y."/>
            <person name="Shimada H."/>
            <person name="Shimada K."/>
            <person name="Silva D."/>
            <person name="Sinclair B."/>
            <person name="Sperling S."/>
            <person name="Stupka E."/>
            <person name="Sugiura K."/>
            <person name="Sultana R."/>
            <person name="Takenaka Y."/>
            <person name="Taki K."/>
            <person name="Tammoja K."/>
            <person name="Tan S.L."/>
            <person name="Tang S."/>
            <person name="Taylor M.S."/>
            <person name="Tegner J."/>
            <person name="Teichmann S.A."/>
            <person name="Ueda H.R."/>
            <person name="van Nimwegen E."/>
            <person name="Verardo R."/>
            <person name="Wei C.L."/>
            <person name="Yagi K."/>
            <person name="Yamanishi H."/>
            <person name="Zabarovsky E."/>
            <person name="Zhu S."/>
            <person name="Zimmer A."/>
            <person name="Hide W."/>
            <person name="Bult C."/>
            <person name="Grimmond S.M."/>
            <person name="Teasdale R.D."/>
            <person name="Liu E.T."/>
            <person name="Brusic V."/>
            <person name="Quackenbush J."/>
            <person name="Wahlestedt C."/>
            <person name="Mattick J.S."/>
            <person name="Hume D.A."/>
            <person name="Kai C."/>
            <person name="Sasaki D."/>
            <person name="Tomaru Y."/>
            <person name="Fukuda S."/>
            <person name="Kanamori-Katayama M."/>
            <person name="Suzuki M."/>
            <person name="Aoki J."/>
            <person name="Arakawa T."/>
            <person name="Iida J."/>
            <person name="Imamura K."/>
            <person name="Itoh M."/>
            <person name="Kato T."/>
            <person name="Kawaji H."/>
            <person name="Kawagashira N."/>
            <person name="Kawashima T."/>
            <person name="Kojima M."/>
            <person name="Kondo S."/>
            <person name="Konno H."/>
            <person name="Nakano K."/>
            <person name="Ninomiya N."/>
            <person name="Nishio T."/>
            <person name="Okada M."/>
            <person name="Plessy C."/>
            <person name="Shibata K."/>
            <person name="Shiraki T."/>
            <person name="Suzuki S."/>
            <person name="Tagami M."/>
            <person name="Waki K."/>
            <person name="Watahiki A."/>
            <person name="Okamura-Oho Y."/>
            <person name="Suzuki H."/>
            <person name="Kawai J."/>
            <person name="Hayashizaki Y."/>
        </authorList>
    </citation>
    <scope>NUCLEOTIDE SEQUENCE [LARGE SCALE MRNA]</scope>
    <source>
        <strain>C57BL/6J</strain>
        <tissue>Embryo</tissue>
        <tissue>Inner ear</tissue>
    </source>
</reference>
<reference key="2">
    <citation type="journal article" date="2004" name="Genome Res.">
        <title>The status, quality, and expansion of the NIH full-length cDNA project: the Mammalian Gene Collection (MGC).</title>
        <authorList>
            <consortium name="The MGC Project Team"/>
        </authorList>
    </citation>
    <scope>NUCLEOTIDE SEQUENCE [LARGE SCALE MRNA]</scope>
    <source>
        <strain>FVB/N</strain>
        <tissue>Kidney</tissue>
    </source>
</reference>
<reference key="3">
    <citation type="journal article" date="2008" name="FEBS J.">
        <title>Mammalian Gup1, a homolog of Saccharomyces cerevisiae glycerol uptake/transporter 1, acts as a negative regulator for N-terminal palmitoylation of Sonic hedgehog.</title>
        <authorList>
            <person name="Abe Y."/>
            <person name="Kita Y."/>
            <person name="Niikura T."/>
        </authorList>
    </citation>
    <scope>FUNCTION</scope>
    <scope>INTERACTION WITH SHH</scope>
    <scope>SUBCELLULAR LOCATION</scope>
</reference>
<reference key="4">
    <citation type="journal article" date="2010" name="Cell">
        <title>A tissue-specific atlas of mouse protein phosphorylation and expression.</title>
        <authorList>
            <person name="Huttlin E.L."/>
            <person name="Jedrychowski M.P."/>
            <person name="Elias J.E."/>
            <person name="Goswami T."/>
            <person name="Rad R."/>
            <person name="Beausoleil S.A."/>
            <person name="Villen J."/>
            <person name="Haas W."/>
            <person name="Sowa M.E."/>
            <person name="Gygi S.P."/>
        </authorList>
    </citation>
    <scope>IDENTIFICATION BY MASS SPECTROMETRY [LARGE SCALE ANALYSIS]</scope>
    <source>
        <tissue>Heart</tissue>
    </source>
</reference>
<dbReference type="EMBL" id="AK003605">
    <property type="protein sequence ID" value="BAB22885.1"/>
    <property type="molecule type" value="mRNA"/>
</dbReference>
<dbReference type="EMBL" id="AK157924">
    <property type="protein sequence ID" value="BAE34266.1"/>
    <property type="molecule type" value="mRNA"/>
</dbReference>
<dbReference type="EMBL" id="BC024464">
    <property type="protein sequence ID" value="AAH24464.1"/>
    <property type="molecule type" value="mRNA"/>
</dbReference>
<dbReference type="CCDS" id="CCDS23638.1"/>
<dbReference type="RefSeq" id="NP_083371.2">
    <property type="nucleotide sequence ID" value="NM_029095.2"/>
</dbReference>
<dbReference type="RefSeq" id="XP_006512442.1">
    <property type="nucleotide sequence ID" value="XM_006512379.4"/>
</dbReference>
<dbReference type="RefSeq" id="XP_006512443.1">
    <property type="nucleotide sequence ID" value="XM_006512380.5"/>
</dbReference>
<dbReference type="RefSeq" id="XP_006512444.1">
    <property type="nucleotide sequence ID" value="XM_006512381.4"/>
</dbReference>
<dbReference type="RefSeq" id="XP_030100549.1">
    <property type="nucleotide sequence ID" value="XM_030244689.2"/>
</dbReference>
<dbReference type="SMR" id="Q9D1G3"/>
<dbReference type="FunCoup" id="Q9D1G3">
    <property type="interactions" value="185"/>
</dbReference>
<dbReference type="IntAct" id="Q9D1G3">
    <property type="interactions" value="1"/>
</dbReference>
<dbReference type="STRING" id="10090.ENSMUSP00000035110"/>
<dbReference type="TCDB" id="2.A.50.1.2">
    <property type="family name" value="the glycerol uptake (gup) or membrane-bound acyl transferase (mboat) family"/>
</dbReference>
<dbReference type="GlyGen" id="Q9D1G3">
    <property type="glycosylation" value="1 site, 1 O-linked glycan (1 site)"/>
</dbReference>
<dbReference type="iPTMnet" id="Q9D1G3"/>
<dbReference type="PhosphoSitePlus" id="Q9D1G3"/>
<dbReference type="jPOST" id="Q9D1G3"/>
<dbReference type="PaxDb" id="10090-ENSMUSP00000035110"/>
<dbReference type="ProteomicsDB" id="269567"/>
<dbReference type="Antibodypedia" id="2917">
    <property type="antibodies" value="70 antibodies from 22 providers"/>
</dbReference>
<dbReference type="DNASU" id="74770"/>
<dbReference type="Ensembl" id="ENSMUST00000035110.11">
    <property type="protein sequence ID" value="ENSMUSP00000035110.5"/>
    <property type="gene ID" value="ENSMUSG00000032523.12"/>
</dbReference>
<dbReference type="Ensembl" id="ENSMUST00000163981.3">
    <property type="protein sequence ID" value="ENSMUSP00000131971.2"/>
    <property type="gene ID" value="ENSMUSG00000032523.12"/>
</dbReference>
<dbReference type="GeneID" id="74770"/>
<dbReference type="KEGG" id="mmu:74770"/>
<dbReference type="UCSC" id="uc009sdw.2">
    <property type="organism name" value="mouse"/>
</dbReference>
<dbReference type="AGR" id="MGI:1922020"/>
<dbReference type="CTD" id="57467"/>
<dbReference type="MGI" id="MGI:1922020">
    <property type="gene designation" value="Hhatl"/>
</dbReference>
<dbReference type="VEuPathDB" id="HostDB:ENSMUSG00000032523"/>
<dbReference type="eggNOG" id="KOG3860">
    <property type="taxonomic scope" value="Eukaryota"/>
</dbReference>
<dbReference type="GeneTree" id="ENSGT00530000063629"/>
<dbReference type="HOGENOM" id="CLU_027533_0_0_1"/>
<dbReference type="InParanoid" id="Q9D1G3"/>
<dbReference type="OMA" id="HRAVMYM"/>
<dbReference type="OrthoDB" id="420606at2759"/>
<dbReference type="PhylomeDB" id="Q9D1G3"/>
<dbReference type="TreeFam" id="TF315826"/>
<dbReference type="BioGRID-ORCS" id="74770">
    <property type="hits" value="2 hits in 77 CRISPR screens"/>
</dbReference>
<dbReference type="PRO" id="PR:Q9D1G3"/>
<dbReference type="Proteomes" id="UP000000589">
    <property type="component" value="Chromosome 9"/>
</dbReference>
<dbReference type="RNAct" id="Q9D1G3">
    <property type="molecule type" value="protein"/>
</dbReference>
<dbReference type="Bgee" id="ENSMUSG00000032523">
    <property type="expression patterns" value="Expressed in vestibular membrane of cochlear duct and 100 other cell types or tissues"/>
</dbReference>
<dbReference type="ExpressionAtlas" id="Q9D1G3">
    <property type="expression patterns" value="baseline and differential"/>
</dbReference>
<dbReference type="GO" id="GO:0005783">
    <property type="term" value="C:endoplasmic reticulum"/>
    <property type="evidence" value="ECO:0000314"/>
    <property type="project" value="UniProtKB"/>
</dbReference>
<dbReference type="GO" id="GO:0005789">
    <property type="term" value="C:endoplasmic reticulum membrane"/>
    <property type="evidence" value="ECO:0007669"/>
    <property type="project" value="UniProtKB-SubCell"/>
</dbReference>
<dbReference type="GO" id="GO:0048471">
    <property type="term" value="C:perinuclear region of cytoplasm"/>
    <property type="evidence" value="ECO:0007669"/>
    <property type="project" value="Ensembl"/>
</dbReference>
<dbReference type="GO" id="GO:0060262">
    <property type="term" value="P:negative regulation of N-terminal protein palmitoylation"/>
    <property type="evidence" value="ECO:0000314"/>
    <property type="project" value="UniProtKB"/>
</dbReference>
<dbReference type="InterPro" id="IPR051085">
    <property type="entry name" value="MB_O-acyltransferase"/>
</dbReference>
<dbReference type="InterPro" id="IPR004299">
    <property type="entry name" value="MBOAT_fam"/>
</dbReference>
<dbReference type="PANTHER" id="PTHR13285">
    <property type="entry name" value="ACYLTRANSFERASE"/>
    <property type="match status" value="1"/>
</dbReference>
<dbReference type="PANTHER" id="PTHR13285:SF19">
    <property type="entry name" value="PROTEIN-CYSTEINE N-PALMITOYLTRANSFERASE HHAT-LIKE PROTEIN"/>
    <property type="match status" value="1"/>
</dbReference>
<dbReference type="Pfam" id="PF03062">
    <property type="entry name" value="MBOAT"/>
    <property type="match status" value="1"/>
</dbReference>
<proteinExistence type="evidence at protein level"/>
<feature type="chain" id="PRO_0000213131" description="Protein-cysteine N-palmitoyltransferase HHAT-like protein">
    <location>
        <begin position="1"/>
        <end position="503"/>
    </location>
</feature>
<feature type="transmembrane region" description="Helical" evidence="1">
    <location>
        <begin position="12"/>
        <end position="31"/>
    </location>
</feature>
<feature type="transmembrane region" description="Helical" evidence="1">
    <location>
        <begin position="65"/>
        <end position="87"/>
    </location>
</feature>
<feature type="transmembrane region" description="Helical" evidence="1">
    <location>
        <begin position="100"/>
        <end position="122"/>
    </location>
</feature>
<feature type="transmembrane region" description="Helical" evidence="1">
    <location>
        <begin position="127"/>
        <end position="149"/>
    </location>
</feature>
<feature type="transmembrane region" description="Helical" evidence="1">
    <location>
        <begin position="250"/>
        <end position="272"/>
    </location>
</feature>
<feature type="transmembrane region" description="Helical" evidence="1">
    <location>
        <begin position="287"/>
        <end position="309"/>
    </location>
</feature>
<feature type="transmembrane region" description="Helical" evidence="1">
    <location>
        <begin position="426"/>
        <end position="445"/>
    </location>
</feature>
<feature type="transmembrane region" description="Helical" evidence="1">
    <location>
        <begin position="460"/>
        <end position="482"/>
    </location>
</feature>
<feature type="sequence conflict" description="In Ref. 1; BAB22885." evidence="3" ref="1">
    <original>S</original>
    <variation>F</variation>
    <location>
        <position position="151"/>
    </location>
</feature>
<name>HHATL_MOUSE</name>
<protein>
    <recommendedName>
        <fullName>Protein-cysteine N-palmitoyltransferase HHAT-like protein</fullName>
    </recommendedName>
    <alternativeName>
        <fullName>Glycerol uptake/transporter homolog</fullName>
    </alternativeName>
    <alternativeName>
        <fullName>Hedgehog acyltransferase-like protein</fullName>
    </alternativeName>
</protein>
<comment type="function">
    <text evidence="2">Negatively regulates N-terminal palmitoylation of SHH by HHAT/SKN.</text>
</comment>
<comment type="subunit">
    <text evidence="2">Interacts with SHH.</text>
</comment>
<comment type="subcellular location">
    <subcellularLocation>
        <location evidence="2">Endoplasmic reticulum membrane</location>
        <topology evidence="2">Multi-pass membrane protein</topology>
    </subcellularLocation>
</comment>
<comment type="similarity">
    <text evidence="3">Belongs to the membrane-bound acyltransferase family. HHAT subfamily.</text>
</comment>
<sequence length="503" mass="56431">MGIKTALPAAELGLYSLVLSGALAYAGRGLLEASQDGAHRKAFRESVRPGWEYLGRKMDVADFEWVMWFTNFRNVIVFALSGHVLFAKLCTMVAPQLRSWMYAVYGVLAVVGTMGPWYLLLLLGHCMVLYVASLLGQRWLCLALGLASLASFKVDPGISWQSGFVTGTFDLQDVLFHGGSSFTVLRCTSFALESCAHPDRRYSLADLLKYNFYLPFFFFGPIMTFDRFHAQVSQEPVRPEGELWHIQAQAGLSAAAIVAVDVFFHFFYILTIPSDLKFASRLPDSALAGLAYSNLVYDWVKAAVLFGVVNTVARLDHLDPPQPPKCITALYVFGETHFDRGINDWLCKYVYDHIGGDHSTVIPELAASVATFVVTTLWLGPCDIVYLWSVLNCFGLNFELWVQKLAERGPLAQIEARLSEQMSRRVRALCGAVNFWAIIMYNLVSLNSLEFTELVARRLILTGFPQTTLAVLFVTYCGVQLVKERERSLALEEEQRQDREKLE</sequence>
<gene>
    <name type="primary">Hhatl</name>
    <name type="synonym">Gup1</name>
    <name type="synonym">Kiaa1173</name>
</gene>
<evidence type="ECO:0000255" key="1"/>
<evidence type="ECO:0000269" key="2">
    <source>
    </source>
</evidence>
<evidence type="ECO:0000305" key="3"/>
<organism>
    <name type="scientific">Mus musculus</name>
    <name type="common">Mouse</name>
    <dbReference type="NCBI Taxonomy" id="10090"/>
    <lineage>
        <taxon>Eukaryota</taxon>
        <taxon>Metazoa</taxon>
        <taxon>Chordata</taxon>
        <taxon>Craniata</taxon>
        <taxon>Vertebrata</taxon>
        <taxon>Euteleostomi</taxon>
        <taxon>Mammalia</taxon>
        <taxon>Eutheria</taxon>
        <taxon>Euarchontoglires</taxon>
        <taxon>Glires</taxon>
        <taxon>Rodentia</taxon>
        <taxon>Myomorpha</taxon>
        <taxon>Muroidea</taxon>
        <taxon>Muridae</taxon>
        <taxon>Murinae</taxon>
        <taxon>Mus</taxon>
        <taxon>Mus</taxon>
    </lineage>
</organism>